<proteinExistence type="inferred from homology"/>
<feature type="chain" id="PRO_1000080800" description="Transcriptional repressor NrdR">
    <location>
        <begin position="1"/>
        <end position="159"/>
    </location>
</feature>
<feature type="domain" description="ATP-cone" evidence="1">
    <location>
        <begin position="49"/>
        <end position="139"/>
    </location>
</feature>
<feature type="zinc finger region" evidence="1">
    <location>
        <begin position="3"/>
        <end position="34"/>
    </location>
</feature>
<feature type="region of interest" description="Disordered" evidence="2">
    <location>
        <begin position="1"/>
        <end position="21"/>
    </location>
</feature>
<feature type="compositionally biased region" description="Polar residues" evidence="2">
    <location>
        <begin position="1"/>
        <end position="11"/>
    </location>
</feature>
<organism>
    <name type="scientific">Prochlorococcus marinus (strain AS9601)</name>
    <dbReference type="NCBI Taxonomy" id="146891"/>
    <lineage>
        <taxon>Bacteria</taxon>
        <taxon>Bacillati</taxon>
        <taxon>Cyanobacteriota</taxon>
        <taxon>Cyanophyceae</taxon>
        <taxon>Synechococcales</taxon>
        <taxon>Prochlorococcaceae</taxon>
        <taxon>Prochlorococcus</taxon>
    </lineage>
</organism>
<sequence>MQCPTCQNTDSRVLESRSADSGKSVRRRRECLNCSFRFTTYERVETMPVSVLKKDGGRELFDKQKLFTGISRACEKTNFSSEEIINFVDGIESQIVQDSNKDIKSSHIGELILKNLRKENEVAYIRYASVYRKFNGVKDFISTLESLKGSSKNQLASIS</sequence>
<gene>
    <name evidence="1" type="primary">nrdR</name>
    <name type="ordered locus">A9601_03371</name>
</gene>
<reference key="1">
    <citation type="journal article" date="2007" name="PLoS Genet.">
        <title>Patterns and implications of gene gain and loss in the evolution of Prochlorococcus.</title>
        <authorList>
            <person name="Kettler G.C."/>
            <person name="Martiny A.C."/>
            <person name="Huang K."/>
            <person name="Zucker J."/>
            <person name="Coleman M.L."/>
            <person name="Rodrigue S."/>
            <person name="Chen F."/>
            <person name="Lapidus A."/>
            <person name="Ferriera S."/>
            <person name="Johnson J."/>
            <person name="Steglich C."/>
            <person name="Church G.M."/>
            <person name="Richardson P."/>
            <person name="Chisholm S.W."/>
        </authorList>
    </citation>
    <scope>NUCLEOTIDE SEQUENCE [LARGE SCALE GENOMIC DNA]</scope>
    <source>
        <strain>AS9601</strain>
    </source>
</reference>
<name>NRDR_PROMS</name>
<comment type="function">
    <text evidence="1">Negatively regulates transcription of bacterial ribonucleotide reductase nrd genes and operons by binding to NrdR-boxes.</text>
</comment>
<comment type="cofactor">
    <cofactor evidence="1">
        <name>Zn(2+)</name>
        <dbReference type="ChEBI" id="CHEBI:29105"/>
    </cofactor>
    <text evidence="1">Binds 1 zinc ion.</text>
</comment>
<comment type="similarity">
    <text evidence="1">Belongs to the NrdR family.</text>
</comment>
<dbReference type="EMBL" id="CP000551">
    <property type="protein sequence ID" value="ABM69625.1"/>
    <property type="molecule type" value="Genomic_DNA"/>
</dbReference>
<dbReference type="RefSeq" id="WP_011817801.1">
    <property type="nucleotide sequence ID" value="NC_008816.1"/>
</dbReference>
<dbReference type="SMR" id="A2BPB4"/>
<dbReference type="STRING" id="146891.A9601_03371"/>
<dbReference type="KEGG" id="pmb:A9601_03371"/>
<dbReference type="eggNOG" id="COG1327">
    <property type="taxonomic scope" value="Bacteria"/>
</dbReference>
<dbReference type="HOGENOM" id="CLU_108412_0_0_3"/>
<dbReference type="OrthoDB" id="9807461at2"/>
<dbReference type="Proteomes" id="UP000002590">
    <property type="component" value="Chromosome"/>
</dbReference>
<dbReference type="GO" id="GO:0005524">
    <property type="term" value="F:ATP binding"/>
    <property type="evidence" value="ECO:0007669"/>
    <property type="project" value="UniProtKB-KW"/>
</dbReference>
<dbReference type="GO" id="GO:0003677">
    <property type="term" value="F:DNA binding"/>
    <property type="evidence" value="ECO:0007669"/>
    <property type="project" value="UniProtKB-KW"/>
</dbReference>
<dbReference type="GO" id="GO:0008270">
    <property type="term" value="F:zinc ion binding"/>
    <property type="evidence" value="ECO:0007669"/>
    <property type="project" value="UniProtKB-UniRule"/>
</dbReference>
<dbReference type="GO" id="GO:0045892">
    <property type="term" value="P:negative regulation of DNA-templated transcription"/>
    <property type="evidence" value="ECO:0007669"/>
    <property type="project" value="UniProtKB-UniRule"/>
</dbReference>
<dbReference type="HAMAP" id="MF_00440">
    <property type="entry name" value="NrdR"/>
    <property type="match status" value="1"/>
</dbReference>
<dbReference type="InterPro" id="IPR005144">
    <property type="entry name" value="ATP-cone_dom"/>
</dbReference>
<dbReference type="InterPro" id="IPR055173">
    <property type="entry name" value="NrdR-like_N"/>
</dbReference>
<dbReference type="InterPro" id="IPR003796">
    <property type="entry name" value="RNR_NrdR-like"/>
</dbReference>
<dbReference type="NCBIfam" id="TIGR00244">
    <property type="entry name" value="transcriptional regulator NrdR"/>
    <property type="match status" value="1"/>
</dbReference>
<dbReference type="PANTHER" id="PTHR30455">
    <property type="entry name" value="TRANSCRIPTIONAL REPRESSOR NRDR"/>
    <property type="match status" value="1"/>
</dbReference>
<dbReference type="PANTHER" id="PTHR30455:SF2">
    <property type="entry name" value="TRANSCRIPTIONAL REPRESSOR NRDR"/>
    <property type="match status" value="1"/>
</dbReference>
<dbReference type="Pfam" id="PF03477">
    <property type="entry name" value="ATP-cone"/>
    <property type="match status" value="1"/>
</dbReference>
<dbReference type="Pfam" id="PF22811">
    <property type="entry name" value="Zn_ribbon_NrdR"/>
    <property type="match status" value="1"/>
</dbReference>
<dbReference type="PROSITE" id="PS51161">
    <property type="entry name" value="ATP_CONE"/>
    <property type="match status" value="1"/>
</dbReference>
<keyword id="KW-0067">ATP-binding</keyword>
<keyword id="KW-0238">DNA-binding</keyword>
<keyword id="KW-0479">Metal-binding</keyword>
<keyword id="KW-0547">Nucleotide-binding</keyword>
<keyword id="KW-0678">Repressor</keyword>
<keyword id="KW-0804">Transcription</keyword>
<keyword id="KW-0805">Transcription regulation</keyword>
<keyword id="KW-0862">Zinc</keyword>
<keyword id="KW-0863">Zinc-finger</keyword>
<protein>
    <recommendedName>
        <fullName evidence="1">Transcriptional repressor NrdR</fullName>
    </recommendedName>
</protein>
<accession>A2BPB4</accession>
<evidence type="ECO:0000255" key="1">
    <source>
        <dbReference type="HAMAP-Rule" id="MF_00440"/>
    </source>
</evidence>
<evidence type="ECO:0000256" key="2">
    <source>
        <dbReference type="SAM" id="MobiDB-lite"/>
    </source>
</evidence>